<keyword id="KW-0012">Acyltransferase</keyword>
<keyword id="KW-1185">Reference proteome</keyword>
<keyword id="KW-0808">Transferase</keyword>
<sequence length="452" mass="48612">MEVKVLSSRLVRPSYPASAAAPEEEFVPSSMFDKVTYDMQMAIIYAFRPPGPSVADIEKGLAAVLGVYRLFAGQVVRGGGGELRGVVLNDHGARLVEACVDGSLADIAPAKPSPVVLRLHPSLEGEIEEVVQVQLTRFACGSLAVGFTANHAVADGHATSDFLVAWGRAARGLAVAATAAAPPHHHPGMFRPRDPPLVEFEHRGVEYYRPPPPAAGVDGDVGGDHKQQHGHGGEEASHGIVIHKAHFTKDFIARLRAAASEGRGRPFSRFETILAHVWRTMTRARGLGNPLQSSTIRISVDGRQRLSAPAGYFGNLVLWAFPRATVGDLLGRPLKHAAQVIHDAVARADAAYFRSFVDFASSGAVEGEGLAPTAVLKDVLCPDLEVDSWLTFPFYELDFGGGCPTYFMPSYFPTEGMLFLVPSYLGDGSVDAFVPVFDHNLEAFKQSCYSIE</sequence>
<accession>Q7XXN4</accession>
<reference key="1">
    <citation type="journal article" date="2005" name="Nature">
        <title>The map-based sequence of the rice genome.</title>
        <authorList>
            <consortium name="International rice genome sequencing project (IRGSP)"/>
        </authorList>
    </citation>
    <scope>NUCLEOTIDE SEQUENCE [LARGE SCALE GENOMIC DNA]</scope>
    <source>
        <strain>cv. Nipponbare</strain>
    </source>
</reference>
<reference key="2">
    <citation type="journal article" date="2008" name="Nucleic Acids Res.">
        <title>The rice annotation project database (RAP-DB): 2008 update.</title>
        <authorList>
            <consortium name="The rice annotation project (RAP)"/>
        </authorList>
    </citation>
    <scope>GENOME REANNOTATION</scope>
    <source>
        <strain>cv. Nipponbare</strain>
    </source>
</reference>
<reference key="3">
    <citation type="journal article" date="2013" name="Rice">
        <title>Improvement of the Oryza sativa Nipponbare reference genome using next generation sequence and optical map data.</title>
        <authorList>
            <person name="Kawahara Y."/>
            <person name="de la Bastide M."/>
            <person name="Hamilton J.P."/>
            <person name="Kanamori H."/>
            <person name="McCombie W.R."/>
            <person name="Ouyang S."/>
            <person name="Schwartz D.C."/>
            <person name="Tanaka T."/>
            <person name="Wu J."/>
            <person name="Zhou S."/>
            <person name="Childs K.L."/>
            <person name="Davidson R.M."/>
            <person name="Lin H."/>
            <person name="Quesada-Ocampo L."/>
            <person name="Vaillancourt B."/>
            <person name="Sakai H."/>
            <person name="Lee S.S."/>
            <person name="Kim J."/>
            <person name="Numa H."/>
            <person name="Itoh T."/>
            <person name="Buell C.R."/>
            <person name="Matsumoto T."/>
        </authorList>
    </citation>
    <scope>GENOME REANNOTATION</scope>
    <source>
        <strain>cv. Nipponbare</strain>
    </source>
</reference>
<reference key="4">
    <citation type="journal article" date="2005" name="PLoS Biol.">
        <title>The genomes of Oryza sativa: a history of duplications.</title>
        <authorList>
            <person name="Yu J."/>
            <person name="Wang J."/>
            <person name="Lin W."/>
            <person name="Li S."/>
            <person name="Li H."/>
            <person name="Zhou J."/>
            <person name="Ni P."/>
            <person name="Dong W."/>
            <person name="Hu S."/>
            <person name="Zeng C."/>
            <person name="Zhang J."/>
            <person name="Zhang Y."/>
            <person name="Li R."/>
            <person name="Xu Z."/>
            <person name="Li S."/>
            <person name="Li X."/>
            <person name="Zheng H."/>
            <person name="Cong L."/>
            <person name="Lin L."/>
            <person name="Yin J."/>
            <person name="Geng J."/>
            <person name="Li G."/>
            <person name="Shi J."/>
            <person name="Liu J."/>
            <person name="Lv H."/>
            <person name="Li J."/>
            <person name="Wang J."/>
            <person name="Deng Y."/>
            <person name="Ran L."/>
            <person name="Shi X."/>
            <person name="Wang X."/>
            <person name="Wu Q."/>
            <person name="Li C."/>
            <person name="Ren X."/>
            <person name="Wang J."/>
            <person name="Wang X."/>
            <person name="Li D."/>
            <person name="Liu D."/>
            <person name="Zhang X."/>
            <person name="Ji Z."/>
            <person name="Zhao W."/>
            <person name="Sun Y."/>
            <person name="Zhang Z."/>
            <person name="Bao J."/>
            <person name="Han Y."/>
            <person name="Dong L."/>
            <person name="Ji J."/>
            <person name="Chen P."/>
            <person name="Wu S."/>
            <person name="Liu J."/>
            <person name="Xiao Y."/>
            <person name="Bu D."/>
            <person name="Tan J."/>
            <person name="Yang L."/>
            <person name="Ye C."/>
            <person name="Zhang J."/>
            <person name="Xu J."/>
            <person name="Zhou Y."/>
            <person name="Yu Y."/>
            <person name="Zhang B."/>
            <person name="Zhuang S."/>
            <person name="Wei H."/>
            <person name="Liu B."/>
            <person name="Lei M."/>
            <person name="Yu H."/>
            <person name="Li Y."/>
            <person name="Xu H."/>
            <person name="Wei S."/>
            <person name="He X."/>
            <person name="Fang L."/>
            <person name="Zhang Z."/>
            <person name="Zhang Y."/>
            <person name="Huang X."/>
            <person name="Su Z."/>
            <person name="Tong W."/>
            <person name="Li J."/>
            <person name="Tong Z."/>
            <person name="Li S."/>
            <person name="Ye J."/>
            <person name="Wang L."/>
            <person name="Fang L."/>
            <person name="Lei T."/>
            <person name="Chen C.-S."/>
            <person name="Chen H.-C."/>
            <person name="Xu Z."/>
            <person name="Li H."/>
            <person name="Huang H."/>
            <person name="Zhang F."/>
            <person name="Xu H."/>
            <person name="Li N."/>
            <person name="Zhao C."/>
            <person name="Li S."/>
            <person name="Dong L."/>
            <person name="Huang Y."/>
            <person name="Li L."/>
            <person name="Xi Y."/>
            <person name="Qi Q."/>
            <person name="Li W."/>
            <person name="Zhang B."/>
            <person name="Hu W."/>
            <person name="Zhang Y."/>
            <person name="Tian X."/>
            <person name="Jiao Y."/>
            <person name="Liang X."/>
            <person name="Jin J."/>
            <person name="Gao L."/>
            <person name="Zheng W."/>
            <person name="Hao B."/>
            <person name="Liu S.-M."/>
            <person name="Wang W."/>
            <person name="Yuan L."/>
            <person name="Cao M."/>
            <person name="McDermott J."/>
            <person name="Samudrala R."/>
            <person name="Wang J."/>
            <person name="Wong G.K.-S."/>
            <person name="Yang H."/>
        </authorList>
    </citation>
    <scope>NUCLEOTIDE SEQUENCE [LARGE SCALE GENOMIC DNA]</scope>
    <source>
        <strain>cv. Nipponbare</strain>
    </source>
</reference>
<reference key="5">
    <citation type="journal article" date="2014" name="Nat. Genet.">
        <title>Genome-wide association analyses provide genetic and biochemical insights into natural variation in rice metabolism.</title>
        <authorList>
            <person name="Chen W."/>
            <person name="Gao Y."/>
            <person name="Xie W."/>
            <person name="Gong L."/>
            <person name="Lu K."/>
            <person name="Wang W."/>
            <person name="Li Y."/>
            <person name="Liu X."/>
            <person name="Zhang H."/>
            <person name="Dong H."/>
            <person name="Zhang W."/>
            <person name="Zhang L."/>
            <person name="Yu S."/>
            <person name="Wang G."/>
            <person name="Lian X."/>
            <person name="Luo J."/>
        </authorList>
    </citation>
    <scope>FUNCTION</scope>
</reference>
<reference key="6">
    <citation type="journal article" date="2016" name="J. Integr. Plant Biol.">
        <title>Molecular evidence for biochemical diversification of phenolamide biosynthesis in rice plants.</title>
        <authorList>
            <person name="Tanabe K."/>
            <person name="Hojo Y."/>
            <person name="Shinya T."/>
            <person name="Galis I."/>
        </authorList>
    </citation>
    <scope>FUNCTION</scope>
    <scope>BIOPHYSICOCHEMICAL PROPERTIES</scope>
    <scope>TISSUE SPECIFICITY</scope>
    <scope>INDUCTION BY WOUNDING</scope>
</reference>
<gene>
    <name evidence="8" type="ordered locus">Os09g0544000</name>
    <name evidence="5" type="ordered locus">LOC_Os09g37200</name>
    <name evidence="9" type="ORF">OsJ_30201</name>
    <name evidence="7" type="ORF">P0705E11.4</name>
</gene>
<dbReference type="EC" id="2.3.1.-" evidence="5"/>
<dbReference type="EMBL" id="AP006548">
    <property type="protein sequence ID" value="BAC79155.1"/>
    <property type="molecule type" value="Genomic_DNA"/>
</dbReference>
<dbReference type="EMBL" id="AP008215">
    <property type="protein sequence ID" value="BAF25743.1"/>
    <property type="molecule type" value="Genomic_DNA"/>
</dbReference>
<dbReference type="EMBL" id="AP014965">
    <property type="protein sequence ID" value="BAT09226.1"/>
    <property type="molecule type" value="Genomic_DNA"/>
</dbReference>
<dbReference type="EMBL" id="CM000146">
    <property type="protein sequence ID" value="EAZ45541.1"/>
    <property type="molecule type" value="Genomic_DNA"/>
</dbReference>
<dbReference type="RefSeq" id="XP_015651357.1">
    <property type="nucleotide sequence ID" value="XM_015795871.1"/>
</dbReference>
<dbReference type="SMR" id="Q7XXN4"/>
<dbReference type="FunCoup" id="Q7XXN4">
    <property type="interactions" value="4"/>
</dbReference>
<dbReference type="STRING" id="39947.Q7XXN4"/>
<dbReference type="PaxDb" id="39947-Q7XXN4"/>
<dbReference type="EnsemblPlants" id="Os09t0544000-01">
    <property type="protein sequence ID" value="Os09t0544000-01"/>
    <property type="gene ID" value="Os09g0544000"/>
</dbReference>
<dbReference type="Gramene" id="Os09t0544000-01">
    <property type="protein sequence ID" value="Os09t0544000-01"/>
    <property type="gene ID" value="Os09g0544000"/>
</dbReference>
<dbReference type="KEGG" id="dosa:Os09g0544000"/>
<dbReference type="eggNOG" id="ENOG502QTU2">
    <property type="taxonomic scope" value="Eukaryota"/>
</dbReference>
<dbReference type="HOGENOM" id="CLU_014546_6_2_1"/>
<dbReference type="InParanoid" id="Q7XXN4"/>
<dbReference type="OMA" id="GSPFMFM"/>
<dbReference type="OrthoDB" id="671439at2759"/>
<dbReference type="BRENDA" id="2.3.1.138">
    <property type="organism ID" value="8948"/>
</dbReference>
<dbReference type="Proteomes" id="UP000000763">
    <property type="component" value="Chromosome 9"/>
</dbReference>
<dbReference type="Proteomes" id="UP000007752">
    <property type="component" value="Chromosome 9"/>
</dbReference>
<dbReference type="Proteomes" id="UP000059680">
    <property type="component" value="Chromosome 9"/>
</dbReference>
<dbReference type="GO" id="GO:0016747">
    <property type="term" value="F:acyltransferase activity, transferring groups other than amino-acyl groups"/>
    <property type="evidence" value="ECO:0000318"/>
    <property type="project" value="GO_Central"/>
</dbReference>
<dbReference type="GO" id="GO:0050734">
    <property type="term" value="F:hydroxycinnamoyltransferase activity"/>
    <property type="evidence" value="ECO:0000314"/>
    <property type="project" value="UniProtKB"/>
</dbReference>
<dbReference type="FunFam" id="3.30.559.10:FF:000008">
    <property type="entry name" value="Tryptamine hydroxycinnamoyl transferase"/>
    <property type="match status" value="1"/>
</dbReference>
<dbReference type="FunFam" id="3.30.559.10:FF:000014">
    <property type="entry name" value="Tryptamine hydroxycinnamoyl transferase"/>
    <property type="match status" value="1"/>
</dbReference>
<dbReference type="Gene3D" id="3.30.559.10">
    <property type="entry name" value="Chloramphenicol acetyltransferase-like domain"/>
    <property type="match status" value="2"/>
</dbReference>
<dbReference type="InterPro" id="IPR023213">
    <property type="entry name" value="CAT-like_dom_sf"/>
</dbReference>
<dbReference type="InterPro" id="IPR050317">
    <property type="entry name" value="Plant_Fungal_Acyltransferase"/>
</dbReference>
<dbReference type="PANTHER" id="PTHR31642:SF140">
    <property type="entry name" value="PUTRESCINE HYDROXYCINNAMOYLTRANSFERASE"/>
    <property type="match status" value="1"/>
</dbReference>
<dbReference type="PANTHER" id="PTHR31642">
    <property type="entry name" value="TRICHOTHECENE 3-O-ACETYLTRANSFERASE"/>
    <property type="match status" value="1"/>
</dbReference>
<dbReference type="Pfam" id="PF02458">
    <property type="entry name" value="Transferase"/>
    <property type="match status" value="1"/>
</dbReference>
<protein>
    <recommendedName>
        <fullName evidence="6">Putrescine hydroxycinnamoyltransferase</fullName>
        <ecNumber evidence="5">2.3.1.-</ecNumber>
    </recommendedName>
</protein>
<name>PUHT_ORYSJ</name>
<proteinExistence type="evidence at protein level"/>
<organism>
    <name type="scientific">Oryza sativa subsp. japonica</name>
    <name type="common">Rice</name>
    <dbReference type="NCBI Taxonomy" id="39947"/>
    <lineage>
        <taxon>Eukaryota</taxon>
        <taxon>Viridiplantae</taxon>
        <taxon>Streptophyta</taxon>
        <taxon>Embryophyta</taxon>
        <taxon>Tracheophyta</taxon>
        <taxon>Spermatophyta</taxon>
        <taxon>Magnoliopsida</taxon>
        <taxon>Liliopsida</taxon>
        <taxon>Poales</taxon>
        <taxon>Poaceae</taxon>
        <taxon>BOP clade</taxon>
        <taxon>Oryzoideae</taxon>
        <taxon>Oryzeae</taxon>
        <taxon>Oryzinae</taxon>
        <taxon>Oryza</taxon>
        <taxon>Oryza sativa</taxon>
    </lineage>
</organism>
<comment type="function">
    <text evidence="3 4">Hydroxycinnamoyl transferase that catalyzes the transfer of an acyl from p-coumaryol-CoA to putrescine, to produce coumaroyl putrescine. Can use feruloyl-CoA, caffeoyl-CoA and sinapoyl-CoA as acyl donors. Seems to be able to transfer the acyl group from feruloyl-CoA to the acyl acceptors agmatine and spermidine.</text>
</comment>
<comment type="biophysicochemical properties">
    <kinetics>
        <KM evidence="4">37.3 uM for p-coumaroyl-CoA</KM>
        <KM evidence="4">35.6 uM for feruloyl-CoA</KM>
        <KM evidence="4">66.1 uM for putrescine</KM>
        <KM evidence="4">322 uM for agmatine</KM>
    </kinetics>
</comment>
<comment type="tissue specificity">
    <text evidence="4">Highly expressed in roots. Expressed at low levels in flowers.</text>
</comment>
<comment type="induction">
    <text evidence="4">By wounding.</text>
</comment>
<comment type="similarity">
    <text evidence="5">Belongs to the plant acyltransferase family.</text>
</comment>
<feature type="chain" id="PRO_0000437770" description="Putrescine hydroxycinnamoyltransferase">
    <location>
        <begin position="1"/>
        <end position="452"/>
    </location>
</feature>
<feature type="region of interest" description="Disordered" evidence="2">
    <location>
        <begin position="213"/>
        <end position="234"/>
    </location>
</feature>
<feature type="compositionally biased region" description="Basic and acidic residues" evidence="2">
    <location>
        <begin position="222"/>
        <end position="234"/>
    </location>
</feature>
<feature type="active site" description="Proton acceptor" evidence="1">
    <location>
        <position position="151"/>
    </location>
</feature>
<feature type="active site" description="Proton acceptor" evidence="1">
    <location>
        <position position="398"/>
    </location>
</feature>
<evidence type="ECO:0000250" key="1">
    <source>
        <dbReference type="UniProtKB" id="Q8W1W9"/>
    </source>
</evidence>
<evidence type="ECO:0000256" key="2">
    <source>
        <dbReference type="SAM" id="MobiDB-lite"/>
    </source>
</evidence>
<evidence type="ECO:0000269" key="3">
    <source>
    </source>
</evidence>
<evidence type="ECO:0000269" key="4">
    <source>
    </source>
</evidence>
<evidence type="ECO:0000305" key="5"/>
<evidence type="ECO:0000305" key="6">
    <source>
    </source>
</evidence>
<evidence type="ECO:0000312" key="7">
    <source>
        <dbReference type="EMBL" id="BAC79155.1"/>
    </source>
</evidence>
<evidence type="ECO:0000312" key="8">
    <source>
        <dbReference type="EMBL" id="BAT09226.1"/>
    </source>
</evidence>
<evidence type="ECO:0000312" key="9">
    <source>
        <dbReference type="EMBL" id="EAZ45541.1"/>
    </source>
</evidence>